<protein>
    <recommendedName>
        <fullName evidence="1">Elongation factor 4</fullName>
        <shortName evidence="1">EF-4</shortName>
        <ecNumber evidence="1">3.6.5.n1</ecNumber>
    </recommendedName>
    <alternativeName>
        <fullName evidence="1">Ribosomal back-translocase LepA</fullName>
    </alternativeName>
</protein>
<keyword id="KW-1003">Cell membrane</keyword>
<keyword id="KW-0342">GTP-binding</keyword>
<keyword id="KW-0378">Hydrolase</keyword>
<keyword id="KW-0472">Membrane</keyword>
<keyword id="KW-0547">Nucleotide-binding</keyword>
<keyword id="KW-0648">Protein biosynthesis</keyword>
<gene>
    <name evidence="1" type="primary">lepA</name>
    <name type="ordered locus">Mkms_3556</name>
</gene>
<accession>A1UIU2</accession>
<comment type="function">
    <text evidence="1">Required for accurate and efficient protein synthesis under certain stress conditions. May act as a fidelity factor of the translation reaction, by catalyzing a one-codon backward translocation of tRNAs on improperly translocated ribosomes. Back-translocation proceeds from a post-translocation (POST) complex to a pre-translocation (PRE) complex, thus giving elongation factor G a second chance to translocate the tRNAs correctly. Binds to ribosomes in a GTP-dependent manner.</text>
</comment>
<comment type="catalytic activity">
    <reaction evidence="1">
        <text>GTP + H2O = GDP + phosphate + H(+)</text>
        <dbReference type="Rhea" id="RHEA:19669"/>
        <dbReference type="ChEBI" id="CHEBI:15377"/>
        <dbReference type="ChEBI" id="CHEBI:15378"/>
        <dbReference type="ChEBI" id="CHEBI:37565"/>
        <dbReference type="ChEBI" id="CHEBI:43474"/>
        <dbReference type="ChEBI" id="CHEBI:58189"/>
        <dbReference type="EC" id="3.6.5.n1"/>
    </reaction>
</comment>
<comment type="subcellular location">
    <subcellularLocation>
        <location evidence="1">Cell membrane</location>
        <topology evidence="1">Peripheral membrane protein</topology>
        <orientation evidence="1">Cytoplasmic side</orientation>
    </subcellularLocation>
</comment>
<comment type="similarity">
    <text evidence="1">Belongs to the TRAFAC class translation factor GTPase superfamily. Classic translation factor GTPase family. LepA subfamily.</text>
</comment>
<sequence>MCRRAPRSIPLRCAHAPRRDVYQEIPISSFADQTFTAPAQIRNFCIIAHIDHGKSTLADRMLGITGVVADRDMRAQYLDRMDIERERGITIKAQNVRLPWEVNGEKFVLHLIDTPGHVDFTYEVSRALEACEGAILLVDAAQGIEAQTLANLYLALDRDLAIIPVLNKIDLPAADPDRYAGELAHIIGCEPSDVLRVSGKTGAGVRELLDEVVRLVPPPTGDADAPARAMIFDSVYDIYRGVVTYVRVVDGKITPRERIAMMSTGATHELLEVGIVSPDPKPSAGLGVGEVGYLITGVKDVRQSKVGDTVTTARHGAKEALTGYREPRPMVYSGLYPVDGSDYPVLREALDKLQLNDAALTYEPETSVALGFGFRCGFLGLLHMEITRERLEREFNLDLISTAPNVVYRVEKDDGTEIVVTNPSDWPEGKVRTVYEPVVKTTVIAPSEFIGTIMELCQSRRGELGGMDYLSPERVELRYTMPLGEIIFDFFDSLKSRTRGYASLDYEEAGEQEADLVKVDILLQGEAVDAFSAIVHKDGASAYGNKMTTKLKELIPRQQFEVPVQAAVGSRIIARENIRAIRKDVLSKCYGGDITRKRKLLEKQKEGKKRMKTIGRVDVPQEAFVAALSTDAAGDKPKK</sequence>
<feature type="chain" id="PRO_1000032022" description="Elongation factor 4">
    <location>
        <begin position="1"/>
        <end position="639"/>
    </location>
</feature>
<feature type="domain" description="tr-type G">
    <location>
        <begin position="39"/>
        <end position="220"/>
    </location>
</feature>
<feature type="binding site" evidence="1">
    <location>
        <begin position="51"/>
        <end position="56"/>
    </location>
    <ligand>
        <name>GTP</name>
        <dbReference type="ChEBI" id="CHEBI:37565"/>
    </ligand>
</feature>
<feature type="binding site" evidence="1">
    <location>
        <begin position="167"/>
        <end position="170"/>
    </location>
    <ligand>
        <name>GTP</name>
        <dbReference type="ChEBI" id="CHEBI:37565"/>
    </ligand>
</feature>
<dbReference type="EC" id="3.6.5.n1" evidence="1"/>
<dbReference type="EMBL" id="CP000518">
    <property type="protein sequence ID" value="ABL92750.1"/>
    <property type="molecule type" value="Genomic_DNA"/>
</dbReference>
<dbReference type="SMR" id="A1UIU2"/>
<dbReference type="STRING" id="189918.Mkms_3556"/>
<dbReference type="KEGG" id="mkm:Mkms_3556"/>
<dbReference type="HOGENOM" id="CLU_009995_3_3_11"/>
<dbReference type="GO" id="GO:0005886">
    <property type="term" value="C:plasma membrane"/>
    <property type="evidence" value="ECO:0007669"/>
    <property type="project" value="UniProtKB-SubCell"/>
</dbReference>
<dbReference type="GO" id="GO:0005525">
    <property type="term" value="F:GTP binding"/>
    <property type="evidence" value="ECO:0007669"/>
    <property type="project" value="UniProtKB-UniRule"/>
</dbReference>
<dbReference type="GO" id="GO:0003924">
    <property type="term" value="F:GTPase activity"/>
    <property type="evidence" value="ECO:0007669"/>
    <property type="project" value="UniProtKB-UniRule"/>
</dbReference>
<dbReference type="GO" id="GO:0043022">
    <property type="term" value="F:ribosome binding"/>
    <property type="evidence" value="ECO:0007669"/>
    <property type="project" value="UniProtKB-UniRule"/>
</dbReference>
<dbReference type="GO" id="GO:0003746">
    <property type="term" value="F:translation elongation factor activity"/>
    <property type="evidence" value="ECO:0007669"/>
    <property type="project" value="UniProtKB-UniRule"/>
</dbReference>
<dbReference type="GO" id="GO:0045727">
    <property type="term" value="P:positive regulation of translation"/>
    <property type="evidence" value="ECO:0007669"/>
    <property type="project" value="UniProtKB-UniRule"/>
</dbReference>
<dbReference type="CDD" id="cd03699">
    <property type="entry name" value="EF4_II"/>
    <property type="match status" value="1"/>
</dbReference>
<dbReference type="CDD" id="cd16260">
    <property type="entry name" value="EF4_III"/>
    <property type="match status" value="1"/>
</dbReference>
<dbReference type="CDD" id="cd01890">
    <property type="entry name" value="LepA"/>
    <property type="match status" value="1"/>
</dbReference>
<dbReference type="CDD" id="cd03709">
    <property type="entry name" value="lepA_C"/>
    <property type="match status" value="1"/>
</dbReference>
<dbReference type="FunFam" id="3.30.70.240:FF:000011">
    <property type="entry name" value="Elongation factor 4"/>
    <property type="match status" value="1"/>
</dbReference>
<dbReference type="FunFam" id="3.40.50.300:FF:000078">
    <property type="entry name" value="Elongation factor 4"/>
    <property type="match status" value="1"/>
</dbReference>
<dbReference type="FunFam" id="2.40.30.10:FF:000015">
    <property type="entry name" value="Translation factor GUF1, mitochondrial"/>
    <property type="match status" value="1"/>
</dbReference>
<dbReference type="FunFam" id="3.30.70.2570:FF:000001">
    <property type="entry name" value="Translation factor GUF1, mitochondrial"/>
    <property type="match status" value="1"/>
</dbReference>
<dbReference type="FunFam" id="3.30.70.870:FF:000004">
    <property type="entry name" value="Translation factor GUF1, mitochondrial"/>
    <property type="match status" value="1"/>
</dbReference>
<dbReference type="Gene3D" id="3.30.70.240">
    <property type="match status" value="1"/>
</dbReference>
<dbReference type="Gene3D" id="3.30.70.2570">
    <property type="entry name" value="Elongation factor 4, C-terminal domain"/>
    <property type="match status" value="1"/>
</dbReference>
<dbReference type="Gene3D" id="3.30.70.870">
    <property type="entry name" value="Elongation Factor G (Translational Gtpase), domain 3"/>
    <property type="match status" value="1"/>
</dbReference>
<dbReference type="Gene3D" id="3.40.50.300">
    <property type="entry name" value="P-loop containing nucleotide triphosphate hydrolases"/>
    <property type="match status" value="1"/>
</dbReference>
<dbReference type="Gene3D" id="2.40.30.10">
    <property type="entry name" value="Translation factors"/>
    <property type="match status" value="1"/>
</dbReference>
<dbReference type="HAMAP" id="MF_00071">
    <property type="entry name" value="LepA"/>
    <property type="match status" value="1"/>
</dbReference>
<dbReference type="InterPro" id="IPR006297">
    <property type="entry name" value="EF-4"/>
</dbReference>
<dbReference type="InterPro" id="IPR035647">
    <property type="entry name" value="EFG_III/V"/>
</dbReference>
<dbReference type="InterPro" id="IPR000640">
    <property type="entry name" value="EFG_V-like"/>
</dbReference>
<dbReference type="InterPro" id="IPR004161">
    <property type="entry name" value="EFTu-like_2"/>
</dbReference>
<dbReference type="InterPro" id="IPR031157">
    <property type="entry name" value="G_TR_CS"/>
</dbReference>
<dbReference type="InterPro" id="IPR038363">
    <property type="entry name" value="LepA_C_sf"/>
</dbReference>
<dbReference type="InterPro" id="IPR013842">
    <property type="entry name" value="LepA_CTD"/>
</dbReference>
<dbReference type="InterPro" id="IPR035654">
    <property type="entry name" value="LepA_IV"/>
</dbReference>
<dbReference type="InterPro" id="IPR027417">
    <property type="entry name" value="P-loop_NTPase"/>
</dbReference>
<dbReference type="InterPro" id="IPR005225">
    <property type="entry name" value="Small_GTP-bd"/>
</dbReference>
<dbReference type="InterPro" id="IPR000795">
    <property type="entry name" value="T_Tr_GTP-bd_dom"/>
</dbReference>
<dbReference type="InterPro" id="IPR009000">
    <property type="entry name" value="Transl_B-barrel_sf"/>
</dbReference>
<dbReference type="NCBIfam" id="TIGR01393">
    <property type="entry name" value="lepA"/>
    <property type="match status" value="1"/>
</dbReference>
<dbReference type="NCBIfam" id="TIGR00231">
    <property type="entry name" value="small_GTP"/>
    <property type="match status" value="1"/>
</dbReference>
<dbReference type="PANTHER" id="PTHR43512:SF4">
    <property type="entry name" value="TRANSLATION FACTOR GUF1 HOMOLOG, CHLOROPLASTIC"/>
    <property type="match status" value="1"/>
</dbReference>
<dbReference type="PANTHER" id="PTHR43512">
    <property type="entry name" value="TRANSLATION FACTOR GUF1-RELATED"/>
    <property type="match status" value="1"/>
</dbReference>
<dbReference type="Pfam" id="PF00679">
    <property type="entry name" value="EFG_C"/>
    <property type="match status" value="1"/>
</dbReference>
<dbReference type="Pfam" id="PF00009">
    <property type="entry name" value="GTP_EFTU"/>
    <property type="match status" value="1"/>
</dbReference>
<dbReference type="Pfam" id="PF03144">
    <property type="entry name" value="GTP_EFTU_D2"/>
    <property type="match status" value="1"/>
</dbReference>
<dbReference type="Pfam" id="PF06421">
    <property type="entry name" value="LepA_C"/>
    <property type="match status" value="1"/>
</dbReference>
<dbReference type="PRINTS" id="PR00315">
    <property type="entry name" value="ELONGATNFCT"/>
</dbReference>
<dbReference type="SMART" id="SM00838">
    <property type="entry name" value="EFG_C"/>
    <property type="match status" value="1"/>
</dbReference>
<dbReference type="SUPFAM" id="SSF54980">
    <property type="entry name" value="EF-G C-terminal domain-like"/>
    <property type="match status" value="2"/>
</dbReference>
<dbReference type="SUPFAM" id="SSF52540">
    <property type="entry name" value="P-loop containing nucleoside triphosphate hydrolases"/>
    <property type="match status" value="1"/>
</dbReference>
<dbReference type="SUPFAM" id="SSF50447">
    <property type="entry name" value="Translation proteins"/>
    <property type="match status" value="1"/>
</dbReference>
<dbReference type="PROSITE" id="PS00301">
    <property type="entry name" value="G_TR_1"/>
    <property type="match status" value="1"/>
</dbReference>
<dbReference type="PROSITE" id="PS51722">
    <property type="entry name" value="G_TR_2"/>
    <property type="match status" value="1"/>
</dbReference>
<organism>
    <name type="scientific">Mycobacterium sp. (strain KMS)</name>
    <dbReference type="NCBI Taxonomy" id="189918"/>
    <lineage>
        <taxon>Bacteria</taxon>
        <taxon>Bacillati</taxon>
        <taxon>Actinomycetota</taxon>
        <taxon>Actinomycetes</taxon>
        <taxon>Mycobacteriales</taxon>
        <taxon>Mycobacteriaceae</taxon>
        <taxon>Mycobacterium</taxon>
    </lineage>
</organism>
<name>LEPA_MYCSK</name>
<proteinExistence type="inferred from homology"/>
<evidence type="ECO:0000255" key="1">
    <source>
        <dbReference type="HAMAP-Rule" id="MF_00071"/>
    </source>
</evidence>
<reference key="1">
    <citation type="submission" date="2006-12" db="EMBL/GenBank/DDBJ databases">
        <title>Complete sequence of chromosome of Mycobacterium sp. KMS.</title>
        <authorList>
            <consortium name="US DOE Joint Genome Institute"/>
            <person name="Copeland A."/>
            <person name="Lucas S."/>
            <person name="Lapidus A."/>
            <person name="Barry K."/>
            <person name="Detter J.C."/>
            <person name="Glavina del Rio T."/>
            <person name="Hammon N."/>
            <person name="Israni S."/>
            <person name="Dalin E."/>
            <person name="Tice H."/>
            <person name="Pitluck S."/>
            <person name="Kiss H."/>
            <person name="Brettin T."/>
            <person name="Bruce D."/>
            <person name="Han C."/>
            <person name="Tapia R."/>
            <person name="Gilna P."/>
            <person name="Schmutz J."/>
            <person name="Larimer F."/>
            <person name="Land M."/>
            <person name="Hauser L."/>
            <person name="Kyrpides N."/>
            <person name="Mikhailova N."/>
            <person name="Miller C.D."/>
            <person name="Richardson P."/>
        </authorList>
    </citation>
    <scope>NUCLEOTIDE SEQUENCE [LARGE SCALE GENOMIC DNA]</scope>
    <source>
        <strain>KMS</strain>
    </source>
</reference>